<sequence>MKFLAVVSLLAATALALPNAGVVHPTFASADKYTLQQAQNKCGEHTTLSCCNHVSKVGDTTAFNYGLLNGLLGNAISGPEGVGILSGCQKISVTALIGVDDLLNKQCQQNVACCQDNKSVATGGLINIATPACVALDSII</sequence>
<organism>
    <name type="scientific">Aspergillus fumigatus (strain ATCC MYA-4609 / CBS 101355 / FGSC A1100 / Af293)</name>
    <name type="common">Neosartorya fumigata</name>
    <dbReference type="NCBI Taxonomy" id="330879"/>
    <lineage>
        <taxon>Eukaryota</taxon>
        <taxon>Fungi</taxon>
        <taxon>Dikarya</taxon>
        <taxon>Ascomycota</taxon>
        <taxon>Pezizomycotina</taxon>
        <taxon>Eurotiomycetes</taxon>
        <taxon>Eurotiomycetidae</taxon>
        <taxon>Eurotiales</taxon>
        <taxon>Aspergillaceae</taxon>
        <taxon>Aspergillus</taxon>
        <taxon>Aspergillus subgen. Fumigati</taxon>
    </lineage>
</organism>
<name>RODB_ASPFU</name>
<reference key="1">
    <citation type="journal article" date="2005" name="Nature">
        <title>Genomic sequence of the pathogenic and allergenic filamentous fungus Aspergillus fumigatus.</title>
        <authorList>
            <person name="Nierman W.C."/>
            <person name="Pain A."/>
            <person name="Anderson M.J."/>
            <person name="Wortman J.R."/>
            <person name="Kim H.S."/>
            <person name="Arroyo J."/>
            <person name="Berriman M."/>
            <person name="Abe K."/>
            <person name="Archer D.B."/>
            <person name="Bermejo C."/>
            <person name="Bennett J.W."/>
            <person name="Bowyer P."/>
            <person name="Chen D."/>
            <person name="Collins M."/>
            <person name="Coulsen R."/>
            <person name="Davies R."/>
            <person name="Dyer P.S."/>
            <person name="Farman M.L."/>
            <person name="Fedorova N."/>
            <person name="Fedorova N.D."/>
            <person name="Feldblyum T.V."/>
            <person name="Fischer R."/>
            <person name="Fosker N."/>
            <person name="Fraser A."/>
            <person name="Garcia J.L."/>
            <person name="Garcia M.J."/>
            <person name="Goble A."/>
            <person name="Goldman G.H."/>
            <person name="Gomi K."/>
            <person name="Griffith-Jones S."/>
            <person name="Gwilliam R."/>
            <person name="Haas B.J."/>
            <person name="Haas H."/>
            <person name="Harris D.E."/>
            <person name="Horiuchi H."/>
            <person name="Huang J."/>
            <person name="Humphray S."/>
            <person name="Jimenez J."/>
            <person name="Keller N."/>
            <person name="Khouri H."/>
            <person name="Kitamoto K."/>
            <person name="Kobayashi T."/>
            <person name="Konzack S."/>
            <person name="Kulkarni R."/>
            <person name="Kumagai T."/>
            <person name="Lafton A."/>
            <person name="Latge J.-P."/>
            <person name="Li W."/>
            <person name="Lord A."/>
            <person name="Lu C."/>
            <person name="Majoros W.H."/>
            <person name="May G.S."/>
            <person name="Miller B.L."/>
            <person name="Mohamoud Y."/>
            <person name="Molina M."/>
            <person name="Monod M."/>
            <person name="Mouyna I."/>
            <person name="Mulligan S."/>
            <person name="Murphy L.D."/>
            <person name="O'Neil S."/>
            <person name="Paulsen I."/>
            <person name="Penalva M.A."/>
            <person name="Pertea M."/>
            <person name="Price C."/>
            <person name="Pritchard B.L."/>
            <person name="Quail M.A."/>
            <person name="Rabbinowitsch E."/>
            <person name="Rawlins N."/>
            <person name="Rajandream M.A."/>
            <person name="Reichard U."/>
            <person name="Renauld H."/>
            <person name="Robson G.D."/>
            <person name="Rodriguez de Cordoba S."/>
            <person name="Rodriguez-Pena J.M."/>
            <person name="Ronning C.M."/>
            <person name="Rutter S."/>
            <person name="Salzberg S.L."/>
            <person name="Sanchez M."/>
            <person name="Sanchez-Ferrero J.C."/>
            <person name="Saunders D."/>
            <person name="Seeger K."/>
            <person name="Squares R."/>
            <person name="Squares S."/>
            <person name="Takeuchi M."/>
            <person name="Tekaia F."/>
            <person name="Turner G."/>
            <person name="Vazquez de Aldana C.R."/>
            <person name="Weidman J."/>
            <person name="White O."/>
            <person name="Woodward J.R."/>
            <person name="Yu J.-H."/>
            <person name="Fraser C.M."/>
            <person name="Galagan J.E."/>
            <person name="Asai K."/>
            <person name="Machida M."/>
            <person name="Hall N."/>
            <person name="Barrell B.G."/>
            <person name="Denning D.W."/>
        </authorList>
    </citation>
    <scope>NUCLEOTIDE SEQUENCE [LARGE SCALE GENOMIC DNA]</scope>
    <source>
        <strain>ATCC MYA-4609 / CBS 101355 / FGSC A1100 / Af293</strain>
    </source>
</reference>
<reference key="2">
    <citation type="journal article" date="2003" name="Appl. Environ. Microbiol.">
        <title>Conidial hydrophobins of Aspergillus fumigatus.</title>
        <authorList>
            <person name="Paris S."/>
            <person name="Debeaupuis J.P."/>
            <person name="Crameri R."/>
            <person name="Carey M."/>
            <person name="Charles F."/>
            <person name="Prevost M.C."/>
            <person name="Schmitt C."/>
            <person name="Philippe B."/>
            <person name="Latge J.P."/>
        </authorList>
    </citation>
    <scope>FUNCTION</scope>
    <scope>DISRUPTION PHENOTYPE</scope>
</reference>
<reference key="3">
    <citation type="journal article" date="2017" name="J. Fungi">
        <title>Role of Hydrophobins in Aspergillus fumigatus.</title>
        <authorList>
            <person name="Valsecchi I."/>
            <person name="Dupres V."/>
            <person name="Stephen-Victor E."/>
            <person name="Guijarro J.I."/>
            <person name="Gibbons J."/>
            <person name="Beau R."/>
            <person name="Bayry J."/>
            <person name="Coppee J.Y."/>
            <person name="Lafont F."/>
            <person name="Latge J.P."/>
            <person name="Beauvais A."/>
        </authorList>
    </citation>
    <scope>FUNCTION</scope>
    <scope>INDUCTION</scope>
    <scope>SUBCELLULAR LOCATION</scope>
</reference>
<proteinExistence type="evidence at transcript level"/>
<protein>
    <recommendedName>
        <fullName evidence="6">Class I hydrophobin B</fullName>
    </recommendedName>
    <alternativeName>
        <fullName evidence="6">Rodlet protein B</fullName>
    </alternativeName>
</protein>
<comment type="function">
    <text evidence="4 5 7">Aerial growth, conidiation, and dispersal of filamentous fungi in the environment rely upon a capability of their secreting small amphipathic proteins called hydrophobins (HPBs) with low sequence identity. Class I can self-assemble into an outermost layer of rodlet bundles on aerial cell surfaces, conferring cellular hydrophobicity that supports fungal growth, development and dispersal; whereas Class II form highly ordered films at water-air interfaces through intermolecular interactions but contribute nothing to the rodlet structure (Probable). RodB is a class I hydrophobin that, unlike rodA, is not required for rodlet formation (PubMed:12620846, PubMed:29371496).</text>
</comment>
<comment type="subunit">
    <text evidence="1">Self-assembles to form functional amyloid fibrils called rodlets. Self-assembly into fibrillar rodlets occurs spontaneously at hydrophobic:hydrophilic interfaces and the rodlets further associate laterally to form amphipathic monolayers.</text>
</comment>
<comment type="subcellular location">
    <subcellularLocation>
        <location evidence="5">Secreted</location>
    </subcellularLocation>
    <subcellularLocation>
        <location evidence="5">Spore wall</location>
    </subcellularLocation>
    <text evidence="5">Present in the conidium cell wall, but absent from hyphae of planktonic or biofilm cultures.</text>
</comment>
<comment type="induction">
    <text evidence="5">Highly expressed in biofilm conditions and during infection in a mice invasive aspergillosis model.</text>
</comment>
<comment type="disruption phenotype">
    <text evidence="4">Does not affect the formation of the rodlet layer.</text>
</comment>
<comment type="similarity">
    <text evidence="7">Belongs to the fungal hydrophobin family.</text>
</comment>
<evidence type="ECO:0000250" key="1">
    <source>
        <dbReference type="UniProtKB" id="Q04571"/>
    </source>
</evidence>
<evidence type="ECO:0000255" key="2"/>
<evidence type="ECO:0000255" key="3">
    <source>
        <dbReference type="PROSITE-ProRule" id="PRU00498"/>
    </source>
</evidence>
<evidence type="ECO:0000269" key="4">
    <source>
    </source>
</evidence>
<evidence type="ECO:0000269" key="5">
    <source>
    </source>
</evidence>
<evidence type="ECO:0000303" key="6">
    <source>
    </source>
</evidence>
<evidence type="ECO:0000305" key="7"/>
<feature type="signal peptide" evidence="2">
    <location>
        <begin position="1"/>
        <end position="16"/>
    </location>
</feature>
<feature type="chain" id="PRO_5013987209" description="Class I hydrophobin B">
    <location>
        <begin position="17"/>
        <end position="140"/>
    </location>
</feature>
<feature type="glycosylation site" description="N-linked (GlcNAc...) asparagine" evidence="3">
    <location>
        <position position="117"/>
    </location>
</feature>
<feature type="disulfide bond" evidence="1">
    <location>
        <begin position="42"/>
        <end position="113"/>
    </location>
</feature>
<feature type="disulfide bond" evidence="1">
    <location>
        <begin position="50"/>
        <end position="107"/>
    </location>
</feature>
<feature type="disulfide bond" evidence="1">
    <location>
        <begin position="51"/>
        <end position="88"/>
    </location>
</feature>
<feature type="disulfide bond" evidence="1">
    <location>
        <begin position="114"/>
        <end position="133"/>
    </location>
</feature>
<keyword id="KW-1015">Disulfide bond</keyword>
<keyword id="KW-0325">Glycoprotein</keyword>
<keyword id="KW-1185">Reference proteome</keyword>
<keyword id="KW-0964">Secreted</keyword>
<keyword id="KW-0732">Signal</keyword>
<dbReference type="EMBL" id="AAHF01000004">
    <property type="protein sequence ID" value="EAL91055.1"/>
    <property type="molecule type" value="Genomic_DNA"/>
</dbReference>
<dbReference type="RefSeq" id="XP_753093.1">
    <property type="nucleotide sequence ID" value="XM_748000.1"/>
</dbReference>
<dbReference type="SMR" id="E9QT94"/>
<dbReference type="STRING" id="330879.E9QT94"/>
<dbReference type="EnsemblFungi" id="EAL91055">
    <property type="protein sequence ID" value="EAL91055"/>
    <property type="gene ID" value="AFUA_1G17250"/>
</dbReference>
<dbReference type="GeneID" id="3510125"/>
<dbReference type="KEGG" id="afm:AFUA_1G17250"/>
<dbReference type="eggNOG" id="ENOG502T10M">
    <property type="taxonomic scope" value="Eukaryota"/>
</dbReference>
<dbReference type="HOGENOM" id="CLU_106380_1_0_1"/>
<dbReference type="InParanoid" id="E9QT94"/>
<dbReference type="OMA" id="NCCSEEQ"/>
<dbReference type="OrthoDB" id="4225815at2759"/>
<dbReference type="Proteomes" id="UP000002530">
    <property type="component" value="Chromosome 1"/>
</dbReference>
<dbReference type="GO" id="GO:0005576">
    <property type="term" value="C:extracellular region"/>
    <property type="evidence" value="ECO:0007669"/>
    <property type="project" value="UniProtKB-KW"/>
</dbReference>
<dbReference type="GO" id="GO:0009277">
    <property type="term" value="C:fungal-type cell wall"/>
    <property type="evidence" value="ECO:0007669"/>
    <property type="project" value="InterPro"/>
</dbReference>
<dbReference type="GO" id="GO:0005199">
    <property type="term" value="F:structural constituent of cell wall"/>
    <property type="evidence" value="ECO:0007669"/>
    <property type="project" value="InterPro"/>
</dbReference>
<dbReference type="CDD" id="cd23507">
    <property type="entry name" value="hydrophobin_I"/>
    <property type="match status" value="1"/>
</dbReference>
<dbReference type="InterPro" id="IPR001338">
    <property type="entry name" value="Hydrophobin"/>
</dbReference>
<dbReference type="Pfam" id="PF01185">
    <property type="entry name" value="Hydrophobin"/>
    <property type="match status" value="1"/>
</dbReference>
<dbReference type="SMART" id="SM00075">
    <property type="entry name" value="HYDRO"/>
    <property type="match status" value="1"/>
</dbReference>
<accession>E9QT94</accession>
<gene>
    <name evidence="6" type="primary">rodB</name>
    <name type="ORF">AFUA_1G17250</name>
</gene>